<keyword id="KW-0028">Amino-acid biosynthesis</keyword>
<keyword id="KW-0963">Cytoplasm</keyword>
<keyword id="KW-0274">FAD</keyword>
<keyword id="KW-0285">Flavoprotein</keyword>
<keyword id="KW-0288">FMN</keyword>
<keyword id="KW-0486">Methionine biosynthesis</keyword>
<keyword id="KW-0521">NADP</keyword>
<keyword id="KW-0560">Oxidoreductase</keyword>
<keyword id="KW-0597">Phosphoprotein</keyword>
<keyword id="KW-1185">Reference proteome</keyword>
<keyword id="KW-0949">S-adenosyl-L-methionine</keyword>
<gene>
    <name type="primary">MTRR</name>
</gene>
<protein>
    <recommendedName>
        <fullName>Methionine synthase reductase</fullName>
        <shortName>MSR</shortName>
        <ecNumber evidence="3">1.16.1.8</ecNumber>
    </recommendedName>
    <alternativeName>
        <fullName>Aquacobalamin reductase</fullName>
        <shortName>AqCbl reductase</shortName>
    </alternativeName>
</protein>
<organism>
    <name type="scientific">Bos taurus</name>
    <name type="common">Bovine</name>
    <dbReference type="NCBI Taxonomy" id="9913"/>
    <lineage>
        <taxon>Eukaryota</taxon>
        <taxon>Metazoa</taxon>
        <taxon>Chordata</taxon>
        <taxon>Craniata</taxon>
        <taxon>Vertebrata</taxon>
        <taxon>Euteleostomi</taxon>
        <taxon>Mammalia</taxon>
        <taxon>Eutheria</taxon>
        <taxon>Laurasiatheria</taxon>
        <taxon>Artiodactyla</taxon>
        <taxon>Ruminantia</taxon>
        <taxon>Pecora</taxon>
        <taxon>Bovidae</taxon>
        <taxon>Bovinae</taxon>
        <taxon>Bos</taxon>
    </lineage>
</organism>
<sequence>MRRFLLLYATQRGQAKAIAEEISEKAVTYGFSADLHCISESDKYDLKTETAPLVMVVSTTGNGDPPDTARKFVKAIKDKTLPPDFLAHLRYGLLGLGDSEYTYFCNGGKVIDKRLQELGAQRFYDTGHADDCVGLELVVEPWINGLWAALEKHFLSNRGREDTSETLTMASHASRDAVTPELLHVESQVGLLKLDDSGGKAAKVLEQNAVNSNQSSTLIVDFEASLTHSVPPLSQASLNIPSLPPEYLEVHLEEALGQEESHASVSLVDPVFHVPVSKAVQLTTNDAIKTTLLIELDISKTDFSYQPGDAFNVICPNSDSEVQFLLQRLQLADRREHHVAVTIKADTRKKGAALPQHVPERCSLQFLLTWCLEIRAVPKKAFLRALADHTGDSAERRRLQELCSRQGAADYTRFVREAGACLSDLLRAFPSCQPPLGLLLEHLPKLQPRPYSCASSSLFHPGKLHFIFNIVEFLSNTTEVILRRGVCTGWLATLVESILQPYMCANHVDGKKALAPKISISPRTTNSFHLPDDPSVPIIMVGPGAGVAPFIGFLQHREKLQEQHPGGHFGATWLFFGCRHKERDYLFRDELRHFLKCGVLTHLEVSFSRDVAVGEEEGPAKYVQDSLQRHSKQVAGVLLQDSGYVYVCGDAKNMAKDVHDALVEIISRETGVEKLEAMKTLATLKEEKRYLQDIW</sequence>
<comment type="function">
    <text evidence="2 3">Key enzyme in methionine and folate homeostasis responsible for the reactivation of methionine synthase (MTR/MS) activity by catalyzing the reductive methylation of MTR-bound cob(II)alamin. Cobalamin (vitamin B12) forms a complex with MTR to serve as an intermediary in methyl transfer reactions that cycles between MTR-bound methylcob(III)alamin and MTR bound-cob(I)alamin forms, and occasional oxidative escape of the cob(I)alamin intermediate during the catalytic cycle leads to the inactive cob(II)alamin species. The processing of cobalamin in the cytosol occurs in a multiprotein complex composed of at least MMACHC, MMADHC, MTRR and MTR which may contribute to shuttle safely and efficiently cobalamin towards MTR in order to produce methionine (By similarity). Also necessary for the utilization of methyl groups from the folate cycle, thereby affecting transgenerational epigenetic inheritance (By similarity). Also acts as a molecular chaperone for methionine synthase by stabilizing apoMTR and incorporating methylcob(III)alamin into apoMTR to form the holoenzyme. Also serves as an aquacob(III)alamin reductase by reducing aquacob(III)alamin to cob(II)alamin; this reduction leads to stimulation of the conversion of apoMTR and aquacob(III)alamin to MTR holoenzyme (By similarity).</text>
</comment>
<comment type="catalytic activity">
    <reaction evidence="3">
        <text>2 methylcob(III)alamin-[methionine synthase] + 2 S-adenosyl-L-homocysteine + NADP(+) + H(+) = 2 cob(II)alamin-[methionine synthase] + 2 S-adenosyl-L-methionine + NADPH</text>
        <dbReference type="Rhea" id="RHEA:23908"/>
        <dbReference type="Rhea" id="RHEA-COMP:14714"/>
        <dbReference type="Rhea" id="RHEA-COMP:14715"/>
        <dbReference type="ChEBI" id="CHEBI:15378"/>
        <dbReference type="ChEBI" id="CHEBI:16304"/>
        <dbReference type="ChEBI" id="CHEBI:28115"/>
        <dbReference type="ChEBI" id="CHEBI:57783"/>
        <dbReference type="ChEBI" id="CHEBI:57856"/>
        <dbReference type="ChEBI" id="CHEBI:58349"/>
        <dbReference type="ChEBI" id="CHEBI:59789"/>
        <dbReference type="EC" id="1.16.1.8"/>
    </reaction>
</comment>
<comment type="catalytic activity">
    <reaction evidence="3">
        <text>2 cob(II)alamin + A + 2 H2O + 2 H(+) = 2 aquacob(III)alamin + AH2</text>
        <dbReference type="Rhea" id="RHEA:20752"/>
        <dbReference type="ChEBI" id="CHEBI:13193"/>
        <dbReference type="ChEBI" id="CHEBI:15377"/>
        <dbReference type="ChEBI" id="CHEBI:15378"/>
        <dbReference type="ChEBI" id="CHEBI:15852"/>
        <dbReference type="ChEBI" id="CHEBI:16304"/>
        <dbReference type="ChEBI" id="CHEBI:17499"/>
    </reaction>
    <physiologicalReaction direction="right-to-left" evidence="3">
        <dbReference type="Rhea" id="RHEA:20754"/>
    </physiologicalReaction>
</comment>
<comment type="cofactor">
    <cofactor evidence="3">
        <name>FAD</name>
        <dbReference type="ChEBI" id="CHEBI:57692"/>
    </cofactor>
</comment>
<comment type="cofactor">
    <cofactor evidence="3">
        <name>FMN</name>
        <dbReference type="ChEBI" id="CHEBI:58210"/>
    </cofactor>
</comment>
<comment type="subunit">
    <text evidence="3">Forms a multiprotein complex with MMACHC, MMADHC and MTR.</text>
</comment>
<comment type="subcellular location">
    <subcellularLocation>
        <location evidence="3">Cytoplasm</location>
    </subcellularLocation>
</comment>
<comment type="miscellaneous">
    <text evidence="6">It is debated whether the reduction of free aquacob(II)alamin occurs spontaneously or is enzyme catalyzed.</text>
</comment>
<proteinExistence type="evidence at transcript level"/>
<accession>Q4JIJ2</accession>
<name>MTRR_BOVIN</name>
<feature type="chain" id="PRO_0000409307" description="Methionine synthase reductase">
    <location>
        <begin position="1"/>
        <end position="695"/>
    </location>
</feature>
<feature type="domain" description="Flavodoxin-like" evidence="4">
    <location>
        <begin position="4"/>
        <end position="147"/>
    </location>
</feature>
<feature type="domain" description="FAD-binding FR-type" evidence="5">
    <location>
        <begin position="269"/>
        <end position="531"/>
    </location>
</feature>
<feature type="region of interest" description="Hinge" evidence="1">
    <location>
        <begin position="166"/>
        <end position="245"/>
    </location>
</feature>
<feature type="binding site" evidence="4">
    <location>
        <begin position="10"/>
        <end position="14"/>
    </location>
    <ligand>
        <name>FMN</name>
        <dbReference type="ChEBI" id="CHEBI:58210"/>
    </ligand>
</feature>
<feature type="binding site" evidence="4">
    <location>
        <begin position="93"/>
        <end position="124"/>
    </location>
    <ligand>
        <name>FMN</name>
        <dbReference type="ChEBI" id="CHEBI:58210"/>
    </ligand>
</feature>
<feature type="binding site" evidence="1">
    <location>
        <position position="289"/>
    </location>
    <ligand>
        <name>NADP(+)</name>
        <dbReference type="ChEBI" id="CHEBI:58349"/>
    </ligand>
</feature>
<feature type="binding site" evidence="1">
    <location>
        <begin position="449"/>
        <end position="452"/>
    </location>
    <ligand>
        <name>FAD</name>
        <dbReference type="ChEBI" id="CHEBI:57692"/>
    </ligand>
</feature>
<feature type="binding site" evidence="1">
    <location>
        <begin position="485"/>
        <end position="488"/>
    </location>
    <ligand>
        <name>FAD</name>
        <dbReference type="ChEBI" id="CHEBI:57692"/>
    </ligand>
</feature>
<feature type="binding site" evidence="1">
    <location>
        <begin position="608"/>
        <end position="609"/>
    </location>
    <ligand>
        <name>NADP(+)</name>
        <dbReference type="ChEBI" id="CHEBI:58349"/>
    </ligand>
</feature>
<feature type="binding site" evidence="1">
    <location>
        <begin position="622"/>
        <end position="624"/>
    </location>
    <ligand>
        <name>NADP(+)</name>
        <dbReference type="ChEBI" id="CHEBI:58349"/>
    </ligand>
</feature>
<feature type="binding site" evidence="1">
    <location>
        <position position="657"/>
    </location>
    <ligand>
        <name>NADP(+)</name>
        <dbReference type="ChEBI" id="CHEBI:58349"/>
    </ligand>
</feature>
<feature type="binding site" evidence="1">
    <location>
        <position position="695"/>
    </location>
    <ligand>
        <name>FAD</name>
        <dbReference type="ChEBI" id="CHEBI:57692"/>
    </ligand>
</feature>
<feature type="modified residue" description="Phosphoserine" evidence="3">
    <location>
        <position position="171"/>
    </location>
</feature>
<feature type="modified residue" description="Phosphoserine" evidence="3">
    <location>
        <position position="187"/>
    </location>
</feature>
<evidence type="ECO:0000250" key="1"/>
<evidence type="ECO:0000250" key="2">
    <source>
        <dbReference type="UniProtKB" id="Q8C1A3"/>
    </source>
</evidence>
<evidence type="ECO:0000250" key="3">
    <source>
        <dbReference type="UniProtKB" id="Q9UBK8"/>
    </source>
</evidence>
<evidence type="ECO:0000255" key="4">
    <source>
        <dbReference type="PROSITE-ProRule" id="PRU00088"/>
    </source>
</evidence>
<evidence type="ECO:0000255" key="5">
    <source>
        <dbReference type="PROSITE-ProRule" id="PRU00716"/>
    </source>
</evidence>
<evidence type="ECO:0000305" key="6"/>
<dbReference type="EC" id="1.16.1.8" evidence="3"/>
<dbReference type="EMBL" id="DQ084520">
    <property type="protein sequence ID" value="AAY86763.1"/>
    <property type="molecule type" value="mRNA"/>
</dbReference>
<dbReference type="RefSeq" id="NP_001025470.1">
    <property type="nucleotide sequence ID" value="NM_001030299.1"/>
</dbReference>
<dbReference type="SMR" id="Q4JIJ2"/>
<dbReference type="FunCoup" id="Q4JIJ2">
    <property type="interactions" value="1134"/>
</dbReference>
<dbReference type="STRING" id="9913.ENSBTAP00000012372"/>
<dbReference type="PaxDb" id="9913-ENSBTAP00000012372"/>
<dbReference type="GeneID" id="507991"/>
<dbReference type="KEGG" id="bta:507991"/>
<dbReference type="CTD" id="4552"/>
<dbReference type="eggNOG" id="KOG1158">
    <property type="taxonomic scope" value="Eukaryota"/>
</dbReference>
<dbReference type="InParanoid" id="Q4JIJ2"/>
<dbReference type="OrthoDB" id="1856718at2759"/>
<dbReference type="Proteomes" id="UP000009136">
    <property type="component" value="Unplaced"/>
</dbReference>
<dbReference type="GO" id="GO:0005829">
    <property type="term" value="C:cytosol"/>
    <property type="evidence" value="ECO:0000318"/>
    <property type="project" value="GO_Central"/>
</dbReference>
<dbReference type="GO" id="GO:0030586">
    <property type="term" value="F:[methionine synthase] reductase (NADPH) activity"/>
    <property type="evidence" value="ECO:0000318"/>
    <property type="project" value="GO_Central"/>
</dbReference>
<dbReference type="GO" id="GO:0050660">
    <property type="term" value="F:flavin adenine dinucleotide binding"/>
    <property type="evidence" value="ECO:0000250"/>
    <property type="project" value="UniProtKB"/>
</dbReference>
<dbReference type="GO" id="GO:0010181">
    <property type="term" value="F:FMN binding"/>
    <property type="evidence" value="ECO:0000318"/>
    <property type="project" value="GO_Central"/>
</dbReference>
<dbReference type="GO" id="GO:0016723">
    <property type="term" value="F:oxidoreductase activity, acting on metal ions, NAD or NADP as acceptor"/>
    <property type="evidence" value="ECO:0000250"/>
    <property type="project" value="UniProtKB"/>
</dbReference>
<dbReference type="GO" id="GO:0046655">
    <property type="term" value="P:folic acid metabolic process"/>
    <property type="evidence" value="ECO:0000250"/>
    <property type="project" value="UniProtKB"/>
</dbReference>
<dbReference type="GO" id="GO:0050667">
    <property type="term" value="P:homocysteine metabolic process"/>
    <property type="evidence" value="ECO:0000318"/>
    <property type="project" value="GO_Central"/>
</dbReference>
<dbReference type="GO" id="GO:0009086">
    <property type="term" value="P:methionine biosynthetic process"/>
    <property type="evidence" value="ECO:0000318"/>
    <property type="project" value="GO_Central"/>
</dbReference>
<dbReference type="CDD" id="cd06203">
    <property type="entry name" value="methionine_synthase_red"/>
    <property type="match status" value="1"/>
</dbReference>
<dbReference type="FunFam" id="1.20.990.10:FF:000007">
    <property type="entry name" value="Methionine synthase reductase"/>
    <property type="match status" value="1"/>
</dbReference>
<dbReference type="FunFam" id="3.40.50.360:FF:000025">
    <property type="entry name" value="methionine synthase reductase"/>
    <property type="match status" value="1"/>
</dbReference>
<dbReference type="FunFam" id="3.40.50.80:FF:000018">
    <property type="entry name" value="NADPH--cytochrome P450 reductase"/>
    <property type="match status" value="1"/>
</dbReference>
<dbReference type="Gene3D" id="3.40.50.360">
    <property type="match status" value="1"/>
</dbReference>
<dbReference type="Gene3D" id="1.20.990.10">
    <property type="entry name" value="NADPH-cytochrome p450 Reductase, Chain A, domain 3"/>
    <property type="match status" value="1"/>
</dbReference>
<dbReference type="Gene3D" id="3.40.50.80">
    <property type="entry name" value="Nucleotide-binding domain of ferredoxin-NADP reductase (FNR) module"/>
    <property type="match status" value="1"/>
</dbReference>
<dbReference type="Gene3D" id="2.40.30.10">
    <property type="entry name" value="Translation factors"/>
    <property type="match status" value="1"/>
</dbReference>
<dbReference type="InterPro" id="IPR003097">
    <property type="entry name" value="CysJ-like_FAD-binding"/>
</dbReference>
<dbReference type="InterPro" id="IPR017927">
    <property type="entry name" value="FAD-bd_FR_type"/>
</dbReference>
<dbReference type="InterPro" id="IPR001094">
    <property type="entry name" value="Flavdoxin-like"/>
</dbReference>
<dbReference type="InterPro" id="IPR008254">
    <property type="entry name" value="Flavodoxin/NO_synth"/>
</dbReference>
<dbReference type="InterPro" id="IPR001709">
    <property type="entry name" value="Flavoprot_Pyr_Nucl_cyt_Rdtase"/>
</dbReference>
<dbReference type="InterPro" id="IPR029039">
    <property type="entry name" value="Flavoprotein-like_sf"/>
</dbReference>
<dbReference type="InterPro" id="IPR039261">
    <property type="entry name" value="FNR_nucleotide-bd"/>
</dbReference>
<dbReference type="InterPro" id="IPR023173">
    <property type="entry name" value="NADPH_Cyt_P450_Rdtase_alpha"/>
</dbReference>
<dbReference type="InterPro" id="IPR001433">
    <property type="entry name" value="OxRdtase_FAD/NAD-bd"/>
</dbReference>
<dbReference type="InterPro" id="IPR017938">
    <property type="entry name" value="Riboflavin_synthase-like_b-brl"/>
</dbReference>
<dbReference type="PANTHER" id="PTHR19384:SF84">
    <property type="entry name" value="METHIONINE SYNTHASE REDUCTASE"/>
    <property type="match status" value="1"/>
</dbReference>
<dbReference type="PANTHER" id="PTHR19384">
    <property type="entry name" value="NITRIC OXIDE SYNTHASE-RELATED"/>
    <property type="match status" value="1"/>
</dbReference>
<dbReference type="Pfam" id="PF00667">
    <property type="entry name" value="FAD_binding_1"/>
    <property type="match status" value="1"/>
</dbReference>
<dbReference type="Pfam" id="PF00258">
    <property type="entry name" value="Flavodoxin_1"/>
    <property type="match status" value="1"/>
</dbReference>
<dbReference type="Pfam" id="PF00175">
    <property type="entry name" value="NAD_binding_1"/>
    <property type="match status" value="1"/>
</dbReference>
<dbReference type="PRINTS" id="PR00369">
    <property type="entry name" value="FLAVODOXIN"/>
</dbReference>
<dbReference type="PRINTS" id="PR00371">
    <property type="entry name" value="FPNCR"/>
</dbReference>
<dbReference type="SUPFAM" id="SSF52343">
    <property type="entry name" value="Ferredoxin reductase-like, C-terminal NADP-linked domain"/>
    <property type="match status" value="1"/>
</dbReference>
<dbReference type="SUPFAM" id="SSF52218">
    <property type="entry name" value="Flavoproteins"/>
    <property type="match status" value="1"/>
</dbReference>
<dbReference type="SUPFAM" id="SSF63380">
    <property type="entry name" value="Riboflavin synthase domain-like"/>
    <property type="match status" value="1"/>
</dbReference>
<dbReference type="PROSITE" id="PS51384">
    <property type="entry name" value="FAD_FR"/>
    <property type="match status" value="1"/>
</dbReference>
<dbReference type="PROSITE" id="PS50902">
    <property type="entry name" value="FLAVODOXIN_LIKE"/>
    <property type="match status" value="1"/>
</dbReference>
<reference key="1">
    <citation type="submission" date="2005-06" db="EMBL/GenBank/DDBJ databases">
        <title>Interactions of folic acid-vitamin B12-methionine: effects on liver metabolism and production of dairy cows.</title>
        <authorList>
            <person name="Palin M.F."/>
            <person name="Beaudry D."/>
            <person name="Charest R."/>
            <person name="Girard C."/>
        </authorList>
    </citation>
    <scope>NUCLEOTIDE SEQUENCE [MRNA]</scope>
    <source>
        <tissue>Liver</tissue>
    </source>
</reference>